<organism>
    <name type="scientific">Protochlamydia amoebophila (strain UWE25)</name>
    <dbReference type="NCBI Taxonomy" id="264201"/>
    <lineage>
        <taxon>Bacteria</taxon>
        <taxon>Pseudomonadati</taxon>
        <taxon>Chlamydiota</taxon>
        <taxon>Chlamydiia</taxon>
        <taxon>Parachlamydiales</taxon>
        <taxon>Parachlamydiaceae</taxon>
        <taxon>Candidatus Protochlamydia</taxon>
    </lineage>
</organism>
<reference key="1">
    <citation type="journal article" date="2004" name="Science">
        <title>Illuminating the evolutionary history of chlamydiae.</title>
        <authorList>
            <person name="Horn M."/>
            <person name="Collingro A."/>
            <person name="Schmitz-Esser S."/>
            <person name="Beier C.L."/>
            <person name="Purkhold U."/>
            <person name="Fartmann B."/>
            <person name="Brandt P."/>
            <person name="Nyakatura G.J."/>
            <person name="Droege M."/>
            <person name="Frishman D."/>
            <person name="Rattei T."/>
            <person name="Mewes H.-W."/>
            <person name="Wagner M."/>
        </authorList>
    </citation>
    <scope>NUCLEOTIDE SEQUENCE [LARGE SCALE GENOMIC DNA]</scope>
    <source>
        <strain>UWE25</strain>
    </source>
</reference>
<evidence type="ECO:0000250" key="1"/>
<evidence type="ECO:0000255" key="2"/>
<evidence type="ECO:0000256" key="3">
    <source>
        <dbReference type="SAM" id="MobiDB-lite"/>
    </source>
</evidence>
<evidence type="ECO:0000305" key="4"/>
<name>FTSH_PARUW</name>
<keyword id="KW-0067">ATP-binding</keyword>
<keyword id="KW-0997">Cell inner membrane</keyword>
<keyword id="KW-1003">Cell membrane</keyword>
<keyword id="KW-0378">Hydrolase</keyword>
<keyword id="KW-0472">Membrane</keyword>
<keyword id="KW-0479">Metal-binding</keyword>
<keyword id="KW-0482">Metalloprotease</keyword>
<keyword id="KW-0547">Nucleotide-binding</keyword>
<keyword id="KW-0645">Protease</keyword>
<keyword id="KW-1185">Reference proteome</keyword>
<keyword id="KW-0812">Transmembrane</keyword>
<keyword id="KW-1133">Transmembrane helix</keyword>
<keyword id="KW-0862">Zinc</keyword>
<protein>
    <recommendedName>
        <fullName>ATP-dependent zinc metalloprotease FtsH</fullName>
        <ecNumber>3.4.24.-</ecNumber>
    </recommendedName>
</protein>
<feature type="chain" id="PRO_0000400379" description="ATP-dependent zinc metalloprotease FtsH">
    <location>
        <begin position="1"/>
        <end position="916"/>
    </location>
</feature>
<feature type="topological domain" description="Cytoplasmic" evidence="2">
    <location>
        <begin position="1"/>
        <end position="16"/>
    </location>
</feature>
<feature type="transmembrane region" description="Helical" evidence="2">
    <location>
        <begin position="17"/>
        <end position="37"/>
    </location>
</feature>
<feature type="topological domain" description="Periplasmic" evidence="2">
    <location>
        <begin position="38"/>
        <end position="371"/>
    </location>
</feature>
<feature type="transmembrane region" description="Helical" evidence="2">
    <location>
        <begin position="372"/>
        <end position="392"/>
    </location>
</feature>
<feature type="topological domain" description="Cytoplasmic" evidence="2">
    <location>
        <begin position="393"/>
        <end position="916"/>
    </location>
</feature>
<feature type="region of interest" description="Unknown">
    <location>
        <begin position="1"/>
        <end position="92"/>
    </location>
</feature>
<feature type="region of interest" description="ATP-dependent zinc metalloprotease FtsH">
    <location>
        <begin position="93"/>
        <end position="916"/>
    </location>
</feature>
<feature type="region of interest" description="Disordered" evidence="3">
    <location>
        <begin position="883"/>
        <end position="916"/>
    </location>
</feature>
<feature type="compositionally biased region" description="Polar residues" evidence="3">
    <location>
        <begin position="902"/>
        <end position="916"/>
    </location>
</feature>
<feature type="active site" evidence="1">
    <location>
        <position position="687"/>
    </location>
</feature>
<feature type="binding site" evidence="2">
    <location>
        <begin position="464"/>
        <end position="471"/>
    </location>
    <ligand>
        <name>ATP</name>
        <dbReference type="ChEBI" id="CHEBI:30616"/>
    </ligand>
</feature>
<feature type="binding site" evidence="1">
    <location>
        <position position="686"/>
    </location>
    <ligand>
        <name>Zn(2+)</name>
        <dbReference type="ChEBI" id="CHEBI:29105"/>
        <note>catalytic</note>
    </ligand>
</feature>
<feature type="binding site" evidence="1">
    <location>
        <position position="690"/>
    </location>
    <ligand>
        <name>Zn(2+)</name>
        <dbReference type="ChEBI" id="CHEBI:29105"/>
        <note>catalytic</note>
    </ligand>
</feature>
<feature type="binding site" evidence="1">
    <location>
        <position position="762"/>
    </location>
    <ligand>
        <name>Zn(2+)</name>
        <dbReference type="ChEBI" id="CHEBI:29105"/>
        <note>catalytic</note>
    </ligand>
</feature>
<dbReference type="EC" id="3.4.24.-"/>
<dbReference type="EMBL" id="BX908798">
    <property type="protein sequence ID" value="CAF23364.1"/>
    <property type="molecule type" value="Genomic_DNA"/>
</dbReference>
<dbReference type="RefSeq" id="WP_011175190.1">
    <property type="nucleotide sequence ID" value="NC_005861.2"/>
</dbReference>
<dbReference type="SMR" id="Q6MDI5"/>
<dbReference type="STRING" id="264201.pc0640"/>
<dbReference type="KEGG" id="pcu:PC_RS03065"/>
<dbReference type="eggNOG" id="COG0465">
    <property type="taxonomic scope" value="Bacteria"/>
</dbReference>
<dbReference type="HOGENOM" id="CLU_000688_7_2_0"/>
<dbReference type="OrthoDB" id="9809379at2"/>
<dbReference type="Proteomes" id="UP000000529">
    <property type="component" value="Chromosome"/>
</dbReference>
<dbReference type="GO" id="GO:0005886">
    <property type="term" value="C:plasma membrane"/>
    <property type="evidence" value="ECO:0007669"/>
    <property type="project" value="UniProtKB-SubCell"/>
</dbReference>
<dbReference type="GO" id="GO:0005524">
    <property type="term" value="F:ATP binding"/>
    <property type="evidence" value="ECO:0007669"/>
    <property type="project" value="UniProtKB-UniRule"/>
</dbReference>
<dbReference type="GO" id="GO:0016887">
    <property type="term" value="F:ATP hydrolysis activity"/>
    <property type="evidence" value="ECO:0007669"/>
    <property type="project" value="UniProtKB-UniRule"/>
</dbReference>
<dbReference type="GO" id="GO:0004176">
    <property type="term" value="F:ATP-dependent peptidase activity"/>
    <property type="evidence" value="ECO:0007669"/>
    <property type="project" value="InterPro"/>
</dbReference>
<dbReference type="GO" id="GO:0004222">
    <property type="term" value="F:metalloendopeptidase activity"/>
    <property type="evidence" value="ECO:0007669"/>
    <property type="project" value="InterPro"/>
</dbReference>
<dbReference type="GO" id="GO:0008270">
    <property type="term" value="F:zinc ion binding"/>
    <property type="evidence" value="ECO:0007669"/>
    <property type="project" value="UniProtKB-UniRule"/>
</dbReference>
<dbReference type="GO" id="GO:0030163">
    <property type="term" value="P:protein catabolic process"/>
    <property type="evidence" value="ECO:0007669"/>
    <property type="project" value="UniProtKB-UniRule"/>
</dbReference>
<dbReference type="GO" id="GO:0006508">
    <property type="term" value="P:proteolysis"/>
    <property type="evidence" value="ECO:0007669"/>
    <property type="project" value="UniProtKB-KW"/>
</dbReference>
<dbReference type="CDD" id="cd19501">
    <property type="entry name" value="RecA-like_FtsH"/>
    <property type="match status" value="1"/>
</dbReference>
<dbReference type="FunFam" id="1.10.8.60:FF:000001">
    <property type="entry name" value="ATP-dependent zinc metalloprotease FtsH"/>
    <property type="match status" value="1"/>
</dbReference>
<dbReference type="FunFam" id="1.20.58.760:FF:000001">
    <property type="entry name" value="ATP-dependent zinc metalloprotease FtsH"/>
    <property type="match status" value="1"/>
</dbReference>
<dbReference type="FunFam" id="3.40.50.300:FF:000001">
    <property type="entry name" value="ATP-dependent zinc metalloprotease FtsH"/>
    <property type="match status" value="1"/>
</dbReference>
<dbReference type="Gene3D" id="1.10.8.60">
    <property type="match status" value="1"/>
</dbReference>
<dbReference type="Gene3D" id="3.40.50.300">
    <property type="entry name" value="P-loop containing nucleotide triphosphate hydrolases"/>
    <property type="match status" value="1"/>
</dbReference>
<dbReference type="Gene3D" id="1.20.58.760">
    <property type="entry name" value="Peptidase M41"/>
    <property type="match status" value="1"/>
</dbReference>
<dbReference type="HAMAP" id="MF_01458">
    <property type="entry name" value="FtsH"/>
    <property type="match status" value="1"/>
</dbReference>
<dbReference type="InterPro" id="IPR003593">
    <property type="entry name" value="AAA+_ATPase"/>
</dbReference>
<dbReference type="InterPro" id="IPR041569">
    <property type="entry name" value="AAA_lid_3"/>
</dbReference>
<dbReference type="InterPro" id="IPR003959">
    <property type="entry name" value="ATPase_AAA_core"/>
</dbReference>
<dbReference type="InterPro" id="IPR003960">
    <property type="entry name" value="ATPase_AAA_CS"/>
</dbReference>
<dbReference type="InterPro" id="IPR005936">
    <property type="entry name" value="FtsH"/>
</dbReference>
<dbReference type="InterPro" id="IPR027417">
    <property type="entry name" value="P-loop_NTPase"/>
</dbReference>
<dbReference type="InterPro" id="IPR000642">
    <property type="entry name" value="Peptidase_M41"/>
</dbReference>
<dbReference type="InterPro" id="IPR037219">
    <property type="entry name" value="Peptidase_M41-like"/>
</dbReference>
<dbReference type="NCBIfam" id="TIGR01241">
    <property type="entry name" value="FtsH_fam"/>
    <property type="match status" value="1"/>
</dbReference>
<dbReference type="PANTHER" id="PTHR23076:SF97">
    <property type="entry name" value="ATP-DEPENDENT ZINC METALLOPROTEASE YME1L1"/>
    <property type="match status" value="1"/>
</dbReference>
<dbReference type="PANTHER" id="PTHR23076">
    <property type="entry name" value="METALLOPROTEASE M41 FTSH"/>
    <property type="match status" value="1"/>
</dbReference>
<dbReference type="Pfam" id="PF00004">
    <property type="entry name" value="AAA"/>
    <property type="match status" value="1"/>
</dbReference>
<dbReference type="Pfam" id="PF17862">
    <property type="entry name" value="AAA_lid_3"/>
    <property type="match status" value="1"/>
</dbReference>
<dbReference type="Pfam" id="PF01434">
    <property type="entry name" value="Peptidase_M41"/>
    <property type="match status" value="1"/>
</dbReference>
<dbReference type="SMART" id="SM00382">
    <property type="entry name" value="AAA"/>
    <property type="match status" value="1"/>
</dbReference>
<dbReference type="SUPFAM" id="SSF140990">
    <property type="entry name" value="FtsH protease domain-like"/>
    <property type="match status" value="1"/>
</dbReference>
<dbReference type="SUPFAM" id="SSF52540">
    <property type="entry name" value="P-loop containing nucleoside triphosphate hydrolases"/>
    <property type="match status" value="1"/>
</dbReference>
<dbReference type="PROSITE" id="PS00674">
    <property type="entry name" value="AAA"/>
    <property type="match status" value="1"/>
</dbReference>
<gene>
    <name type="primary">ftsH</name>
    <name type="ordered locus">pc0640</name>
</gene>
<accession>Q6MDI5</accession>
<proteinExistence type="inferred from homology"/>
<sequence length="916" mass="102325">MSDDNKQDFKKGISNSFVWFLMAAFLFALMVQNFIDTKFAKVSFSYQLEHLVNLQLLQPEDSRKIALNDNLVTFSGKFRDRLTEEGKTRYKYLELLDTNHELKAEQARVKDEIKTLKTKVFDSASLFLQLSGLSIPKGGYVVVDDMYNTPEEDQSVVIKDLPKSAVESLVSLEKEYEAARQNPTAESLKNLGNLINELLRNLRSPALGIGSETIKQSLKGIDKEVADSGATSLSEQLAAYGHALVNLKAIIDELNHEEDHIRLAKLRSVRNYKETLDEYNQINTRLDDNQIQLDKARQSVSNVIWYFNNQELSTKALEKQDPEVYNQWFSKAKEEWANFSHNRGGIFRAPDQPLNAVLEKTFKSEEPSPNYFSYLFTLLPVLLVILVLYMLFARQMKGMGNTAMNFGKSPARLLNKGDNKITFKDVAGVDEALEELQEIVEFLKNPQKFTSLGGKIPKGVLCIGPPGTGKTLIAKAVAGEADRPFFSISGSDFVEMFVGVGASRIRDLFEQAKKAAPCIIFMDEIDAVGRHRGVGMGGGHDEREQTLNQLLVEMDGFDTNEGVILMAATNRPDVLDKALLRPGRFDRRVIIGLPDIKGRYDILKVHARRIKMDPSIDLMAIARSTPGSSGADLANILNESALLAARKGRTAVTAQETIEARDKVLYGKERRSLEIDENEKRTTAYHESGHTVVGLIVKSGDPVDKVTIIPRGMSLGATMFLPKKNRVSYWKQELHDQLAVLMGGRVAEEIFVGDVSSGAQQDIERATQLARSMVCKWGMSDKLGAVAYDERSEGGGQYGFGDHHEKTYSDETAQAIDSEVRRILDEALAIARKIILDYKEQVELLTLMLIEFETLDSEDIQEIVVKNNWDAVRKRERLKRAADLHKKEAATPPPPPPREVDISSSGTIPNTLGLSS</sequence>
<comment type="function">
    <text evidence="1">Acts as a processive, ATP-dependent zinc metallopeptidase for both cytoplasmic and membrane proteins. Plays a role in the quality control of integral membrane proteins (By similarity).</text>
</comment>
<comment type="cofactor">
    <cofactor evidence="1">
        <name>Zn(2+)</name>
        <dbReference type="ChEBI" id="CHEBI:29105"/>
    </cofactor>
    <text evidence="1">Binds 1 zinc ion per subunit.</text>
</comment>
<comment type="subunit">
    <text evidence="4">Homohexamer.</text>
</comment>
<comment type="subcellular location">
    <subcellularLocation>
        <location evidence="1">Cell inner membrane</location>
        <topology evidence="1">Multi-pass membrane protein</topology>
        <orientation evidence="1">Cytoplasmic side</orientation>
    </subcellularLocation>
</comment>
<comment type="similarity">
    <text evidence="4">In the central section; belongs to the AAA ATPase family.</text>
</comment>
<comment type="similarity">
    <text evidence="4">In the C-terminal section; belongs to the peptidase M41 family.</text>
</comment>